<accession>Q7ZY36</accession>
<accession>Q32N16</accession>
<protein>
    <recommendedName>
        <fullName evidence="1">Mitochondrial adenyl nucleotide antiporter SLC25A24-A</fullName>
    </recommendedName>
    <alternativeName>
        <fullName evidence="1">Small calcium-binding mitochondrial carrier protein 1-A</fullName>
        <shortName evidence="1">SCaMC-1-A</shortName>
    </alternativeName>
    <alternativeName>
        <fullName>Solute carrier family 25 member 24-A</fullName>
    </alternativeName>
</protein>
<evidence type="ECO:0000250" key="1">
    <source>
        <dbReference type="UniProtKB" id="Q6NUK1"/>
    </source>
</evidence>
<evidence type="ECO:0000255" key="2"/>
<evidence type="ECO:0000255" key="3">
    <source>
        <dbReference type="PROSITE-ProRule" id="PRU00282"/>
    </source>
</evidence>
<evidence type="ECO:0000255" key="4">
    <source>
        <dbReference type="PROSITE-ProRule" id="PRU00448"/>
    </source>
</evidence>
<evidence type="ECO:0000305" key="5"/>
<comment type="function">
    <text evidence="1">Electroneutral antiporter that mediates the transport of adenyl nucleotides through the inner mitochondrial membrane. Originally identified as an ATP-magnesium/inorganic phosphate antiporter, it also acts as a broad specificity adenyl nucleotide antiporter. By regulating the mitochondrial matrix adenyl nucleotide pool could adapt to changing cellular energetic demands and indirectly regulate adenyl nucleotide-dependent metabolic pathways.</text>
</comment>
<comment type="catalytic activity">
    <reaction evidence="1">
        <text>Mg(2+)(out) + phosphate(in) + ATP(out) = Mg(2+)(in) + phosphate(out) + ATP(in)</text>
        <dbReference type="Rhea" id="RHEA:65840"/>
        <dbReference type="ChEBI" id="CHEBI:18420"/>
        <dbReference type="ChEBI" id="CHEBI:30616"/>
        <dbReference type="ChEBI" id="CHEBI:43474"/>
    </reaction>
</comment>
<comment type="catalytic activity">
    <reaction evidence="1">
        <text>ADP(out) + phosphate(in) + H(+)(out) = ADP(in) + phosphate(out) + H(+)(in)</text>
        <dbReference type="Rhea" id="RHEA:65844"/>
        <dbReference type="ChEBI" id="CHEBI:15378"/>
        <dbReference type="ChEBI" id="CHEBI:43474"/>
        <dbReference type="ChEBI" id="CHEBI:456216"/>
    </reaction>
</comment>
<comment type="catalytic activity">
    <reaction evidence="1">
        <text>AMP(out) + phosphate(in) = AMP(in) + phosphate(out)</text>
        <dbReference type="Rhea" id="RHEA:70259"/>
        <dbReference type="ChEBI" id="CHEBI:43474"/>
        <dbReference type="ChEBI" id="CHEBI:456215"/>
    </reaction>
</comment>
<comment type="catalytic activity">
    <reaction evidence="1">
        <text>phosphate(in) + ATP(out) + 2 H(+)(out) = phosphate(out) + ATP(in) + 2 H(+)(in)</text>
        <dbReference type="Rhea" id="RHEA:72035"/>
        <dbReference type="ChEBI" id="CHEBI:15378"/>
        <dbReference type="ChEBI" id="CHEBI:30616"/>
        <dbReference type="ChEBI" id="CHEBI:43474"/>
    </reaction>
</comment>
<comment type="catalytic activity">
    <reaction evidence="1">
        <text>dADP(in) + ADP(out) = dADP(out) + ADP(in)</text>
        <dbReference type="Rhea" id="RHEA:72855"/>
        <dbReference type="ChEBI" id="CHEBI:57667"/>
        <dbReference type="ChEBI" id="CHEBI:456216"/>
    </reaction>
</comment>
<comment type="catalytic activity">
    <reaction evidence="1">
        <text>Mg(2+)(in) + ADP(out) + ATP(in) + H(+)(out) = Mg(2+)(out) + ADP(in) + ATP(out) + H(+)(in)</text>
        <dbReference type="Rhea" id="RHEA:73659"/>
        <dbReference type="ChEBI" id="CHEBI:15378"/>
        <dbReference type="ChEBI" id="CHEBI:18420"/>
        <dbReference type="ChEBI" id="CHEBI:30616"/>
        <dbReference type="ChEBI" id="CHEBI:456216"/>
    </reaction>
</comment>
<comment type="catalytic activity">
    <reaction evidence="1">
        <text>ADP(out) + diphosphate(in) = ADP(in) + diphosphate(out)</text>
        <dbReference type="Rhea" id="RHEA:73671"/>
        <dbReference type="ChEBI" id="CHEBI:33019"/>
        <dbReference type="ChEBI" id="CHEBI:456216"/>
    </reaction>
</comment>
<comment type="catalytic activity">
    <reaction evidence="1">
        <text>dAMP(in) + ADP(out) + H(+)(out) = dAMP(out) + ADP(in) + H(+)(in)</text>
        <dbReference type="Rhea" id="RHEA:73675"/>
        <dbReference type="ChEBI" id="CHEBI:15378"/>
        <dbReference type="ChEBI" id="CHEBI:58245"/>
        <dbReference type="ChEBI" id="CHEBI:456216"/>
    </reaction>
</comment>
<comment type="catalytic activity">
    <reaction evidence="1">
        <text>3'-AMP(in) + ADP(out) + H(+)(out) = 3'-AMP(out) + ADP(in) + H(+)(in)</text>
        <dbReference type="Rhea" id="RHEA:73679"/>
        <dbReference type="ChEBI" id="CHEBI:15378"/>
        <dbReference type="ChEBI" id="CHEBI:60880"/>
        <dbReference type="ChEBI" id="CHEBI:456216"/>
    </reaction>
</comment>
<comment type="catalytic activity">
    <reaction evidence="1">
        <text>dAMP(out) + phosphate(in) = dAMP(in) + phosphate(out)</text>
        <dbReference type="Rhea" id="RHEA:73687"/>
        <dbReference type="ChEBI" id="CHEBI:43474"/>
        <dbReference type="ChEBI" id="CHEBI:58245"/>
    </reaction>
</comment>
<comment type="catalytic activity">
    <reaction evidence="1">
        <text>3'-AMP(out) + phosphate(in) = 3'-AMP(in) + phosphate(out)</text>
        <dbReference type="Rhea" id="RHEA:73691"/>
        <dbReference type="ChEBI" id="CHEBI:43474"/>
        <dbReference type="ChEBI" id="CHEBI:60880"/>
    </reaction>
</comment>
<comment type="catalytic activity">
    <reaction evidence="1">
        <text>dADP(out) + phosphate(in) + H(+)(out) = dADP(in) + phosphate(out) + H(+)(in)</text>
        <dbReference type="Rhea" id="RHEA:73695"/>
        <dbReference type="ChEBI" id="CHEBI:15378"/>
        <dbReference type="ChEBI" id="CHEBI:43474"/>
        <dbReference type="ChEBI" id="CHEBI:57667"/>
    </reaction>
</comment>
<comment type="activity regulation">
    <text evidence="1">Activated by an increase in cytosolic calcium levels that induce a conformational change of the N-terminal regulatory domain, uncapping the channel and allowing transport. Inhibited by bathophenanthroline, mersalyl, p-hydroxymercuribenzoate, bromcresol purple and tannic acid.</text>
</comment>
<comment type="subunit">
    <text evidence="1">Monomer.</text>
</comment>
<comment type="subcellular location">
    <subcellularLocation>
        <location evidence="1">Mitochondrion inner membrane</location>
        <topology evidence="2">Multi-pass membrane protein</topology>
    </subcellularLocation>
</comment>
<comment type="domain">
    <text evidence="1">The regulatory N-terminal domain/NTD formed of two pairs of fused calcium-binding EF-hands, binds calcium in the mitochondrial intermembrane space and regulates the antiporter activity of the transmembrane domain/TMD. In absence of calcium, the apo form of the N-terminal domain is intrinsically disordered and binds to the transmembrane domain, inhibiting the transporter activity. Binding of calcium leads to a major conformational change and abolishes the interaction with the transmembrane domain and the inhibition of the transporter activity.</text>
</comment>
<comment type="domain">
    <text evidence="1">The C-terminal mitochondrial carrier domain/transmembrane domain/TMD bears the transmembrane transporter activity.</text>
</comment>
<comment type="domain">
    <text evidence="1">Linker region/H9 could directly block the transport of substrates across the transporter.</text>
</comment>
<comment type="similarity">
    <text evidence="5">Belongs to the mitochondrial carrier (TC 2.A.29) family.</text>
</comment>
<comment type="sequence caution" evidence="5">
    <conflict type="erroneous initiation">
        <sequence resource="EMBL-CDS" id="AAH43993"/>
    </conflict>
</comment>
<sequence>MLEQVQKFLLSRAACEGSDSHTRYAELFHKLDVNKDGKVDILELQEGLKAMGMAVGKGAEEKIVEAGDTNKDGHLDFGEFMRYLEEHEKKMKIAFTSLDKNKDGKIESSEVMNSLKTLGINISLDHAEKILKSMDSDGTLTVDWNEWRDHFLFNPADNIQQIIRFWKHSTVLDIGDSLTIPDEFTEEEKKTGQWWKHLLAGGMAGAVSRTGTAPLDRLKVMMQVHGTKGNSNIITGLKQMVKEGGVRSLWRGNGVNVIKIAPETAMKFWAYEQYKKLFTSESGKLGTAERFIAGSLAGATAQTSIYPMEVLKTRLAVGKTGQYSGMFDCAKKIMQKEGILAFYKGYIPNILGIIPYAGIDLAIYETLKNYWLQNYAKDSANPGVLVLLGCGTVSSTCGQLASYPLALIRTRMQAQASIEGAPQLNMGGLFRKIVAKEGFFGLYTGIAPNFLKVLPAVSISYVVYEKMKIQLGI</sequence>
<gene>
    <name type="primary">slc25a24-a</name>
    <name type="synonym">scamc1-a</name>
</gene>
<organism>
    <name type="scientific">Xenopus laevis</name>
    <name type="common">African clawed frog</name>
    <dbReference type="NCBI Taxonomy" id="8355"/>
    <lineage>
        <taxon>Eukaryota</taxon>
        <taxon>Metazoa</taxon>
        <taxon>Chordata</taxon>
        <taxon>Craniata</taxon>
        <taxon>Vertebrata</taxon>
        <taxon>Euteleostomi</taxon>
        <taxon>Amphibia</taxon>
        <taxon>Batrachia</taxon>
        <taxon>Anura</taxon>
        <taxon>Pipoidea</taxon>
        <taxon>Pipidae</taxon>
        <taxon>Xenopodinae</taxon>
        <taxon>Xenopus</taxon>
        <taxon>Xenopus</taxon>
    </lineage>
</organism>
<name>SCM1A_XENLA</name>
<keyword id="KW-0050">Antiport</keyword>
<keyword id="KW-0106">Calcium</keyword>
<keyword id="KW-0472">Membrane</keyword>
<keyword id="KW-0479">Metal-binding</keyword>
<keyword id="KW-0496">Mitochondrion</keyword>
<keyword id="KW-0999">Mitochondrion inner membrane</keyword>
<keyword id="KW-1185">Reference proteome</keyword>
<keyword id="KW-0677">Repeat</keyword>
<keyword id="KW-0812">Transmembrane</keyword>
<keyword id="KW-1133">Transmembrane helix</keyword>
<keyword id="KW-0813">Transport</keyword>
<proteinExistence type="evidence at transcript level"/>
<reference key="1">
    <citation type="submission" date="2003-01" db="EMBL/GenBank/DDBJ databases">
        <authorList>
            <consortium name="NIH - Xenopus Gene Collection (XGC) project"/>
        </authorList>
    </citation>
    <scope>NUCLEOTIDE SEQUENCE [LARGE SCALE MRNA]</scope>
    <source>
        <tissue>Embryo</tissue>
    </source>
</reference>
<dbReference type="EMBL" id="BC043993">
    <property type="protein sequence ID" value="AAH43993.1"/>
    <property type="status" value="ALT_INIT"/>
    <property type="molecule type" value="mRNA"/>
</dbReference>
<dbReference type="EMBL" id="BC108882">
    <property type="protein sequence ID" value="AAI08883.1"/>
    <property type="molecule type" value="mRNA"/>
</dbReference>
<dbReference type="RefSeq" id="XP_018112036.1">
    <property type="nucleotide sequence ID" value="XM_018256547.1"/>
</dbReference>
<dbReference type="SMR" id="Q7ZY36"/>
<dbReference type="BioGRID" id="99806">
    <property type="interactions" value="1"/>
</dbReference>
<dbReference type="DNASU" id="398474"/>
<dbReference type="GeneID" id="398474"/>
<dbReference type="KEGG" id="xla:398474"/>
<dbReference type="AGR" id="Xenbase:XB-GENE-976248"/>
<dbReference type="CTD" id="398474"/>
<dbReference type="Xenbase" id="XB-GENE-976248">
    <property type="gene designation" value="slc25a24.L"/>
</dbReference>
<dbReference type="OMA" id="CEIKQSL"/>
<dbReference type="OrthoDB" id="270584at2759"/>
<dbReference type="Proteomes" id="UP000186698">
    <property type="component" value="Chromosome 4L"/>
</dbReference>
<dbReference type="Bgee" id="398474">
    <property type="expression patterns" value="Expressed in intestine and 17 other cell types or tissues"/>
</dbReference>
<dbReference type="GO" id="GO:0016020">
    <property type="term" value="C:membrane"/>
    <property type="evidence" value="ECO:0000250"/>
    <property type="project" value="UniProtKB"/>
</dbReference>
<dbReference type="GO" id="GO:0005743">
    <property type="term" value="C:mitochondrial inner membrane"/>
    <property type="evidence" value="ECO:0007669"/>
    <property type="project" value="UniProtKB-SubCell"/>
</dbReference>
<dbReference type="GO" id="GO:0005739">
    <property type="term" value="C:mitochondrion"/>
    <property type="evidence" value="ECO:0000250"/>
    <property type="project" value="UniProtKB"/>
</dbReference>
<dbReference type="GO" id="GO:0000295">
    <property type="term" value="F:adenine nucleotide transmembrane transporter activity"/>
    <property type="evidence" value="ECO:0000250"/>
    <property type="project" value="UniProtKB"/>
</dbReference>
<dbReference type="GO" id="GO:0140988">
    <property type="term" value="F:ADP:phosphate antiporter activity"/>
    <property type="evidence" value="ECO:0000250"/>
    <property type="project" value="UniProtKB"/>
</dbReference>
<dbReference type="GO" id="GO:0005347">
    <property type="term" value="F:ATP transmembrane transporter activity"/>
    <property type="evidence" value="ECO:0000318"/>
    <property type="project" value="GO_Central"/>
</dbReference>
<dbReference type="GO" id="GO:0140987">
    <property type="term" value="F:ATP:phosphate antiporter activity"/>
    <property type="evidence" value="ECO:0000250"/>
    <property type="project" value="UniProtKB"/>
</dbReference>
<dbReference type="GO" id="GO:0005509">
    <property type="term" value="F:calcium ion binding"/>
    <property type="evidence" value="ECO:0000250"/>
    <property type="project" value="UniProtKB"/>
</dbReference>
<dbReference type="GO" id="GO:0051503">
    <property type="term" value="P:adenine nucleotide transport"/>
    <property type="evidence" value="ECO:0000250"/>
    <property type="project" value="UniProtKB"/>
</dbReference>
<dbReference type="GO" id="GO:0015866">
    <property type="term" value="P:ADP transport"/>
    <property type="evidence" value="ECO:0000318"/>
    <property type="project" value="GO_Central"/>
</dbReference>
<dbReference type="GO" id="GO:0015867">
    <property type="term" value="P:ATP transport"/>
    <property type="evidence" value="ECO:0000318"/>
    <property type="project" value="GO_Central"/>
</dbReference>
<dbReference type="GO" id="GO:0071277">
    <property type="term" value="P:cellular response to calcium ion"/>
    <property type="evidence" value="ECO:0000250"/>
    <property type="project" value="UniProtKB"/>
</dbReference>
<dbReference type="GO" id="GO:1990544">
    <property type="term" value="P:mitochondrial ATP transmembrane transport"/>
    <property type="evidence" value="ECO:0000250"/>
    <property type="project" value="UniProtKB"/>
</dbReference>
<dbReference type="FunFam" id="1.10.238.10:FF:000028">
    <property type="entry name" value="Putative calcium-binding mitochondrial carrier protein scamc-2"/>
    <property type="match status" value="1"/>
</dbReference>
<dbReference type="FunFam" id="1.50.40.10:FF:000003">
    <property type="entry name" value="Putative calcium-binding mitochondrial carrier protein scamc-2"/>
    <property type="match status" value="1"/>
</dbReference>
<dbReference type="FunFam" id="1.10.238.10:FF:000168">
    <property type="entry name" value="Solute carrier family 25 member 24"/>
    <property type="match status" value="1"/>
</dbReference>
<dbReference type="Gene3D" id="1.10.238.10">
    <property type="entry name" value="EF-hand"/>
    <property type="match status" value="2"/>
</dbReference>
<dbReference type="Gene3D" id="1.50.40.10">
    <property type="entry name" value="Mitochondrial carrier domain"/>
    <property type="match status" value="1"/>
</dbReference>
<dbReference type="InterPro" id="IPR011992">
    <property type="entry name" value="EF-hand-dom_pair"/>
</dbReference>
<dbReference type="InterPro" id="IPR018247">
    <property type="entry name" value="EF_Hand_1_Ca_BS"/>
</dbReference>
<dbReference type="InterPro" id="IPR002048">
    <property type="entry name" value="EF_hand_dom"/>
</dbReference>
<dbReference type="InterPro" id="IPR002167">
    <property type="entry name" value="GDC-like"/>
</dbReference>
<dbReference type="InterPro" id="IPR002067">
    <property type="entry name" value="Mit_carrier"/>
</dbReference>
<dbReference type="InterPro" id="IPR018108">
    <property type="entry name" value="Mitochondrial_sb/sol_carrier"/>
</dbReference>
<dbReference type="InterPro" id="IPR023395">
    <property type="entry name" value="Mt_carrier_dom_sf"/>
</dbReference>
<dbReference type="PANTHER" id="PTHR24089">
    <property type="entry name" value="SOLUTE CARRIER FAMILY 25"/>
    <property type="match status" value="1"/>
</dbReference>
<dbReference type="Pfam" id="PF13499">
    <property type="entry name" value="EF-hand_7"/>
    <property type="match status" value="2"/>
</dbReference>
<dbReference type="Pfam" id="PF00153">
    <property type="entry name" value="Mito_carr"/>
    <property type="match status" value="3"/>
</dbReference>
<dbReference type="PRINTS" id="PR00928">
    <property type="entry name" value="GRAVESDC"/>
</dbReference>
<dbReference type="PRINTS" id="PR00926">
    <property type="entry name" value="MITOCARRIER"/>
</dbReference>
<dbReference type="SMART" id="SM00054">
    <property type="entry name" value="EFh"/>
    <property type="match status" value="3"/>
</dbReference>
<dbReference type="SUPFAM" id="SSF47473">
    <property type="entry name" value="EF-hand"/>
    <property type="match status" value="1"/>
</dbReference>
<dbReference type="SUPFAM" id="SSF103506">
    <property type="entry name" value="Mitochondrial carrier"/>
    <property type="match status" value="1"/>
</dbReference>
<dbReference type="PROSITE" id="PS00018">
    <property type="entry name" value="EF_HAND_1"/>
    <property type="match status" value="3"/>
</dbReference>
<dbReference type="PROSITE" id="PS50222">
    <property type="entry name" value="EF_HAND_2"/>
    <property type="match status" value="4"/>
</dbReference>
<dbReference type="PROSITE" id="PS50920">
    <property type="entry name" value="SOLCAR"/>
    <property type="match status" value="3"/>
</dbReference>
<feature type="chain" id="PRO_0000317598" description="Mitochondrial adenyl nucleotide antiporter SLC25A24-A">
    <location>
        <begin position="1"/>
        <end position="473"/>
    </location>
</feature>
<feature type="topological domain" description="Mitochondrial intermembrane" evidence="1">
    <location>
        <begin position="1"/>
        <end position="197"/>
    </location>
</feature>
<feature type="transmembrane region" description="Helical; Name=1" evidence="2">
    <location>
        <begin position="198"/>
        <end position="215"/>
    </location>
</feature>
<feature type="topological domain" description="Mitochondrial matrix" evidence="1">
    <location>
        <begin position="216"/>
        <end position="251"/>
    </location>
</feature>
<feature type="transmembrane region" description="Helical; Name=2" evidence="2">
    <location>
        <begin position="252"/>
        <end position="271"/>
    </location>
</feature>
<feature type="topological domain" description="Mitochondrial intermembrane" evidence="1">
    <location>
        <begin position="272"/>
        <end position="294"/>
    </location>
</feature>
<feature type="transmembrane region" description="Helical; Name=3" evidence="2">
    <location>
        <begin position="295"/>
        <end position="308"/>
    </location>
</feature>
<feature type="topological domain" description="Mitochondrial matrix" evidence="1">
    <location>
        <begin position="309"/>
        <end position="344"/>
    </location>
</feature>
<feature type="transmembrane region" description="Helical; Name=4" evidence="2">
    <location>
        <begin position="345"/>
        <end position="364"/>
    </location>
</feature>
<feature type="topological domain" description="Mitochondrial intermembrane" evidence="1">
    <location>
        <begin position="365"/>
        <end position="387"/>
    </location>
</feature>
<feature type="transmembrane region" description="Helical; Name=5" evidence="2">
    <location>
        <begin position="388"/>
        <end position="405"/>
    </location>
</feature>
<feature type="topological domain" description="Mitochondrial matrix" evidence="1">
    <location>
        <begin position="406"/>
        <end position="444"/>
    </location>
</feature>
<feature type="transmembrane region" description="Helical; Name=6" evidence="2">
    <location>
        <begin position="445"/>
        <end position="464"/>
    </location>
</feature>
<feature type="topological domain" description="Mitochondrial intermembrane" evidence="1">
    <location>
        <begin position="465"/>
        <end position="473"/>
    </location>
</feature>
<feature type="domain" description="EF-hand 1" evidence="4">
    <location>
        <begin position="19"/>
        <end position="54"/>
    </location>
</feature>
<feature type="domain" description="EF-hand 2" evidence="4">
    <location>
        <begin position="55"/>
        <end position="88"/>
    </location>
</feature>
<feature type="domain" description="EF-hand 3" evidence="4">
    <location>
        <begin position="86"/>
        <end position="121"/>
    </location>
</feature>
<feature type="domain" description="EF-hand 4" evidence="4">
    <location>
        <begin position="122"/>
        <end position="157"/>
    </location>
</feature>
<feature type="repeat" description="Solcar 1" evidence="3">
    <location>
        <begin position="192"/>
        <end position="277"/>
    </location>
</feature>
<feature type="repeat" description="Solcar 2" evidence="3">
    <location>
        <begin position="285"/>
        <end position="370"/>
    </location>
</feature>
<feature type="repeat" description="Solcar 3" evidence="3">
    <location>
        <begin position="382"/>
        <end position="470"/>
    </location>
</feature>
<feature type="region of interest" description="Regulatory N-terminal domain" evidence="1">
    <location>
        <begin position="1"/>
        <end position="173"/>
    </location>
</feature>
<feature type="region of interest" description="Linker region" evidence="1">
    <location>
        <begin position="159"/>
        <end position="168"/>
    </location>
</feature>
<feature type="region of interest" description="C-terminal transmembrane transporter domain" evidence="1">
    <location>
        <begin position="174"/>
        <end position="473"/>
    </location>
</feature>
<feature type="binding site" evidence="4">
    <location>
        <position position="32"/>
    </location>
    <ligand>
        <name>Ca(2+)</name>
        <dbReference type="ChEBI" id="CHEBI:29108"/>
        <label>1</label>
    </ligand>
</feature>
<feature type="binding site" evidence="4">
    <location>
        <position position="34"/>
    </location>
    <ligand>
        <name>Ca(2+)</name>
        <dbReference type="ChEBI" id="CHEBI:29108"/>
        <label>1</label>
    </ligand>
</feature>
<feature type="binding site" evidence="4">
    <location>
        <position position="36"/>
    </location>
    <ligand>
        <name>Ca(2+)</name>
        <dbReference type="ChEBI" id="CHEBI:29108"/>
        <label>1</label>
    </ligand>
</feature>
<feature type="binding site" evidence="4">
    <location>
        <position position="38"/>
    </location>
    <ligand>
        <name>Ca(2+)</name>
        <dbReference type="ChEBI" id="CHEBI:29108"/>
        <label>1</label>
    </ligand>
</feature>
<feature type="binding site" evidence="4">
    <location>
        <position position="43"/>
    </location>
    <ligand>
        <name>Ca(2+)</name>
        <dbReference type="ChEBI" id="CHEBI:29108"/>
        <label>1</label>
    </ligand>
</feature>
<feature type="binding site" evidence="4">
    <location>
        <position position="68"/>
    </location>
    <ligand>
        <name>Ca(2+)</name>
        <dbReference type="ChEBI" id="CHEBI:29108"/>
        <label>2</label>
    </ligand>
</feature>
<feature type="binding site" evidence="4">
    <location>
        <position position="70"/>
    </location>
    <ligand>
        <name>Ca(2+)</name>
        <dbReference type="ChEBI" id="CHEBI:29108"/>
        <label>2</label>
    </ligand>
</feature>
<feature type="binding site" evidence="4">
    <location>
        <position position="72"/>
    </location>
    <ligand>
        <name>Ca(2+)</name>
        <dbReference type="ChEBI" id="CHEBI:29108"/>
        <label>2</label>
    </ligand>
</feature>
<feature type="binding site" evidence="4">
    <location>
        <position position="74"/>
    </location>
    <ligand>
        <name>Ca(2+)</name>
        <dbReference type="ChEBI" id="CHEBI:29108"/>
        <label>2</label>
    </ligand>
</feature>
<feature type="binding site" evidence="4">
    <location>
        <position position="79"/>
    </location>
    <ligand>
        <name>Ca(2+)</name>
        <dbReference type="ChEBI" id="CHEBI:29108"/>
        <label>2</label>
    </ligand>
</feature>
<feature type="binding site" evidence="4">
    <location>
        <position position="99"/>
    </location>
    <ligand>
        <name>Ca(2+)</name>
        <dbReference type="ChEBI" id="CHEBI:29108"/>
        <label>3</label>
    </ligand>
</feature>
<feature type="binding site" evidence="4">
    <location>
        <position position="101"/>
    </location>
    <ligand>
        <name>Ca(2+)</name>
        <dbReference type="ChEBI" id="CHEBI:29108"/>
        <label>3</label>
    </ligand>
</feature>
<feature type="binding site" evidence="4">
    <location>
        <position position="103"/>
    </location>
    <ligand>
        <name>Ca(2+)</name>
        <dbReference type="ChEBI" id="CHEBI:29108"/>
        <label>3</label>
    </ligand>
</feature>
<feature type="binding site" evidence="4">
    <location>
        <position position="105"/>
    </location>
    <ligand>
        <name>Ca(2+)</name>
        <dbReference type="ChEBI" id="CHEBI:29108"/>
        <label>3</label>
    </ligand>
</feature>
<feature type="binding site" evidence="4">
    <location>
        <position position="110"/>
    </location>
    <ligand>
        <name>Ca(2+)</name>
        <dbReference type="ChEBI" id="CHEBI:29108"/>
        <label>3</label>
    </ligand>
</feature>
<feature type="binding site" evidence="1">
    <location>
        <position position="135"/>
    </location>
    <ligand>
        <name>Ca(2+)</name>
        <dbReference type="ChEBI" id="CHEBI:29108"/>
        <label>4</label>
    </ligand>
</feature>
<feature type="binding site" evidence="1">
    <location>
        <position position="137"/>
    </location>
    <ligand>
        <name>Ca(2+)</name>
        <dbReference type="ChEBI" id="CHEBI:29108"/>
        <label>4</label>
    </ligand>
</feature>
<feature type="binding site" evidence="1">
    <location>
        <position position="139"/>
    </location>
    <ligand>
        <name>Ca(2+)</name>
        <dbReference type="ChEBI" id="CHEBI:29108"/>
        <label>4</label>
    </ligand>
</feature>
<feature type="binding site" evidence="1">
    <location>
        <position position="141"/>
    </location>
    <ligand>
        <name>Ca(2+)</name>
        <dbReference type="ChEBI" id="CHEBI:29108"/>
        <label>4</label>
    </ligand>
</feature>
<feature type="binding site" evidence="1">
    <location>
        <position position="146"/>
    </location>
    <ligand>
        <name>Ca(2+)</name>
        <dbReference type="ChEBI" id="CHEBI:29108"/>
        <label>4</label>
    </ligand>
</feature>